<accession>P24222</accession>
<sequence>IVLHGRAWGELYVARQAGQPVFDRADADFATVLAAVVASGIAQTERLEEVRKLAFTDPLTGLANRRAVDVRLDEAMERHRVDATVVSLVVCDLNGLKAVNDTHGHAVGDRLLERFGSVLSLCGAMLPEALAARLGGDEFCLLTAGPPADAVVGVATELCDRAAVIELGDGVACGVASTGDPIGPVRSARRLFRLADAAQYRAKAARAPGPVVAGRDGEVVRLADSPPKSAHDRRRLRGNRP</sequence>
<protein>
    <recommendedName>
        <fullName>Uncharacterized protein in hutH 5'region</fullName>
    </recommendedName>
</protein>
<reference key="1">
    <citation type="journal article" date="1992" name="J. Bacteriol.">
        <title>Purification of histidase from Streptomyces griseus and nucleotide sequence of the hutH structural gene.</title>
        <authorList>
            <person name="Wu P.-C."/>
            <person name="Kroening T.A."/>
            <person name="White P.J."/>
            <person name="Kendrick K.E."/>
        </authorList>
    </citation>
    <scope>NUCLEOTIDE SEQUENCE [GENOMIC DNA]</scope>
    <source>
        <strain>ATCC 23345 / DSM 40236 / JCM 4644 / NBRC 12875 / NCIMB 13023 / NRRL B-2682 / VKM Ac-800 / IMRU 3463</strain>
    </source>
</reference>
<proteinExistence type="predicted"/>
<dbReference type="EMBL" id="M77841">
    <property type="protein sequence ID" value="AAA26768.1"/>
    <property type="molecule type" value="Genomic_DNA"/>
</dbReference>
<dbReference type="PIR" id="A42299">
    <property type="entry name" value="A42299"/>
</dbReference>
<dbReference type="SMR" id="P24222"/>
<dbReference type="STRING" id="1911.GCA_001715295_02094"/>
<dbReference type="GO" id="GO:0005886">
    <property type="term" value="C:plasma membrane"/>
    <property type="evidence" value="ECO:0007669"/>
    <property type="project" value="TreeGrafter"/>
</dbReference>
<dbReference type="GO" id="GO:0052621">
    <property type="term" value="F:diguanylate cyclase activity"/>
    <property type="evidence" value="ECO:0007669"/>
    <property type="project" value="TreeGrafter"/>
</dbReference>
<dbReference type="GO" id="GO:0043709">
    <property type="term" value="P:cell adhesion involved in single-species biofilm formation"/>
    <property type="evidence" value="ECO:0007669"/>
    <property type="project" value="TreeGrafter"/>
</dbReference>
<dbReference type="GO" id="GO:1902201">
    <property type="term" value="P:negative regulation of bacterial-type flagellum-dependent cell motility"/>
    <property type="evidence" value="ECO:0007669"/>
    <property type="project" value="TreeGrafter"/>
</dbReference>
<dbReference type="CDD" id="cd01949">
    <property type="entry name" value="GGDEF"/>
    <property type="match status" value="1"/>
</dbReference>
<dbReference type="FunFam" id="3.30.70.270:FF:000044">
    <property type="entry name" value="Diguanylate cyclase (GGDEF)-like protein"/>
    <property type="match status" value="1"/>
</dbReference>
<dbReference type="Gene3D" id="3.30.70.270">
    <property type="match status" value="1"/>
</dbReference>
<dbReference type="InterPro" id="IPR050469">
    <property type="entry name" value="Diguanylate_Cyclase"/>
</dbReference>
<dbReference type="InterPro" id="IPR000160">
    <property type="entry name" value="GGDEF_dom"/>
</dbReference>
<dbReference type="InterPro" id="IPR029787">
    <property type="entry name" value="Nucleotide_cyclase"/>
</dbReference>
<dbReference type="InterPro" id="IPR043128">
    <property type="entry name" value="Rev_trsase/Diguanyl_cyclase"/>
</dbReference>
<dbReference type="NCBIfam" id="TIGR00254">
    <property type="entry name" value="GGDEF"/>
    <property type="match status" value="1"/>
</dbReference>
<dbReference type="PANTHER" id="PTHR45138:SF24">
    <property type="entry name" value="DIGUANYLATE CYCLASE DGCC-RELATED"/>
    <property type="match status" value="1"/>
</dbReference>
<dbReference type="PANTHER" id="PTHR45138">
    <property type="entry name" value="REGULATORY COMPONENTS OF SENSORY TRANSDUCTION SYSTEM"/>
    <property type="match status" value="1"/>
</dbReference>
<dbReference type="Pfam" id="PF00990">
    <property type="entry name" value="GGDEF"/>
    <property type="match status" value="1"/>
</dbReference>
<dbReference type="SMART" id="SM00267">
    <property type="entry name" value="GGDEF"/>
    <property type="match status" value="1"/>
</dbReference>
<dbReference type="SUPFAM" id="SSF55781">
    <property type="entry name" value="GAF domain-like"/>
    <property type="match status" value="1"/>
</dbReference>
<dbReference type="SUPFAM" id="SSF55073">
    <property type="entry name" value="Nucleotide cyclase"/>
    <property type="match status" value="1"/>
</dbReference>
<dbReference type="PROSITE" id="PS50887">
    <property type="entry name" value="GGDEF"/>
    <property type="match status" value="1"/>
</dbReference>
<name>YHUH_STRGR</name>
<organism>
    <name type="scientific">Streptomyces griseus</name>
    <dbReference type="NCBI Taxonomy" id="1911"/>
    <lineage>
        <taxon>Bacteria</taxon>
        <taxon>Bacillati</taxon>
        <taxon>Actinomycetota</taxon>
        <taxon>Actinomycetes</taxon>
        <taxon>Kitasatosporales</taxon>
        <taxon>Streptomycetaceae</taxon>
        <taxon>Streptomyces</taxon>
    </lineage>
</organism>
<evidence type="ECO:0000255" key="1">
    <source>
        <dbReference type="PROSITE-ProRule" id="PRU00095"/>
    </source>
</evidence>
<evidence type="ECO:0000256" key="2">
    <source>
        <dbReference type="SAM" id="MobiDB-lite"/>
    </source>
</evidence>
<feature type="chain" id="PRO_0000066257" description="Uncharacterized protein in hutH 5'region">
    <location>
        <begin position="1" status="less than"/>
        <end position="241"/>
    </location>
</feature>
<feature type="domain" description="GGDEF" evidence="1">
    <location>
        <begin position="84"/>
        <end position="216"/>
    </location>
</feature>
<feature type="region of interest" description="Disordered" evidence="2">
    <location>
        <begin position="215"/>
        <end position="241"/>
    </location>
</feature>
<feature type="compositionally biased region" description="Basic residues" evidence="2">
    <location>
        <begin position="231"/>
        <end position="241"/>
    </location>
</feature>
<feature type="non-terminal residue">
    <location>
        <position position="1"/>
    </location>
</feature>